<name>PDXT_BREBN</name>
<organism>
    <name type="scientific">Brevibacillus brevis (strain 47 / JCM 6285 / NBRC 100599)</name>
    <dbReference type="NCBI Taxonomy" id="358681"/>
    <lineage>
        <taxon>Bacteria</taxon>
        <taxon>Bacillati</taxon>
        <taxon>Bacillota</taxon>
        <taxon>Bacilli</taxon>
        <taxon>Bacillales</taxon>
        <taxon>Paenibacillaceae</taxon>
        <taxon>Brevibacillus</taxon>
    </lineage>
</organism>
<keyword id="KW-0315">Glutamine amidotransferase</keyword>
<keyword id="KW-0378">Hydrolase</keyword>
<keyword id="KW-0456">Lyase</keyword>
<keyword id="KW-0663">Pyridoxal phosphate</keyword>
<keyword id="KW-1185">Reference proteome</keyword>
<comment type="function">
    <text evidence="1">Catalyzes the hydrolysis of glutamine to glutamate and ammonia as part of the biosynthesis of pyridoxal 5'-phosphate. The resulting ammonia molecule is channeled to the active site of PdxS.</text>
</comment>
<comment type="catalytic activity">
    <reaction evidence="1">
        <text>aldehydo-D-ribose 5-phosphate + D-glyceraldehyde 3-phosphate + L-glutamine = pyridoxal 5'-phosphate + L-glutamate + phosphate + 3 H2O + H(+)</text>
        <dbReference type="Rhea" id="RHEA:31507"/>
        <dbReference type="ChEBI" id="CHEBI:15377"/>
        <dbReference type="ChEBI" id="CHEBI:15378"/>
        <dbReference type="ChEBI" id="CHEBI:29985"/>
        <dbReference type="ChEBI" id="CHEBI:43474"/>
        <dbReference type="ChEBI" id="CHEBI:58273"/>
        <dbReference type="ChEBI" id="CHEBI:58359"/>
        <dbReference type="ChEBI" id="CHEBI:59776"/>
        <dbReference type="ChEBI" id="CHEBI:597326"/>
        <dbReference type="EC" id="4.3.3.6"/>
    </reaction>
</comment>
<comment type="catalytic activity">
    <reaction evidence="1">
        <text>L-glutamine + H2O = L-glutamate + NH4(+)</text>
        <dbReference type="Rhea" id="RHEA:15889"/>
        <dbReference type="ChEBI" id="CHEBI:15377"/>
        <dbReference type="ChEBI" id="CHEBI:28938"/>
        <dbReference type="ChEBI" id="CHEBI:29985"/>
        <dbReference type="ChEBI" id="CHEBI:58359"/>
        <dbReference type="EC" id="3.5.1.2"/>
    </reaction>
</comment>
<comment type="pathway">
    <text evidence="1">Cofactor biosynthesis; pyridoxal 5'-phosphate biosynthesis.</text>
</comment>
<comment type="subunit">
    <text evidence="1">In the presence of PdxS, forms a dodecamer of heterodimers. Only shows activity in the heterodimer.</text>
</comment>
<comment type="similarity">
    <text evidence="1">Belongs to the glutaminase PdxT/SNO family.</text>
</comment>
<gene>
    <name evidence="1" type="primary">pdxT</name>
    <name type="ordered locus">BBR47_00170</name>
</gene>
<feature type="chain" id="PRO_1000185879" description="Pyridoxal 5'-phosphate synthase subunit PdxT">
    <location>
        <begin position="1"/>
        <end position="191"/>
    </location>
</feature>
<feature type="active site" description="Nucleophile" evidence="1">
    <location>
        <position position="78"/>
    </location>
</feature>
<feature type="active site" description="Charge relay system" evidence="1">
    <location>
        <position position="169"/>
    </location>
</feature>
<feature type="active site" description="Charge relay system" evidence="1">
    <location>
        <position position="171"/>
    </location>
</feature>
<feature type="binding site" evidence="1">
    <location>
        <begin position="46"/>
        <end position="48"/>
    </location>
    <ligand>
        <name>L-glutamine</name>
        <dbReference type="ChEBI" id="CHEBI:58359"/>
    </ligand>
</feature>
<feature type="binding site" evidence="1">
    <location>
        <position position="105"/>
    </location>
    <ligand>
        <name>L-glutamine</name>
        <dbReference type="ChEBI" id="CHEBI:58359"/>
    </ligand>
</feature>
<feature type="binding site" evidence="1">
    <location>
        <begin position="133"/>
        <end position="134"/>
    </location>
    <ligand>
        <name>L-glutamine</name>
        <dbReference type="ChEBI" id="CHEBI:58359"/>
    </ligand>
</feature>
<protein>
    <recommendedName>
        <fullName evidence="1">Pyridoxal 5'-phosphate synthase subunit PdxT</fullName>
        <ecNumber evidence="1">4.3.3.6</ecNumber>
    </recommendedName>
    <alternativeName>
        <fullName evidence="1">Pdx2</fullName>
    </alternativeName>
    <alternativeName>
        <fullName evidence="1">Pyridoxal 5'-phosphate synthase glutaminase subunit</fullName>
        <ecNumber evidence="1">3.5.1.2</ecNumber>
    </alternativeName>
</protein>
<dbReference type="EC" id="4.3.3.6" evidence="1"/>
<dbReference type="EC" id="3.5.1.2" evidence="1"/>
<dbReference type="EMBL" id="AP008955">
    <property type="protein sequence ID" value="BAH40994.1"/>
    <property type="molecule type" value="Genomic_DNA"/>
</dbReference>
<dbReference type="RefSeq" id="WP_012683799.1">
    <property type="nucleotide sequence ID" value="NC_012491.1"/>
</dbReference>
<dbReference type="SMR" id="C0ZH53"/>
<dbReference type="STRING" id="358681.BBR47_00170"/>
<dbReference type="MEROPS" id="C26.A32"/>
<dbReference type="KEGG" id="bbe:BBR47_00170"/>
<dbReference type="eggNOG" id="COG0311">
    <property type="taxonomic scope" value="Bacteria"/>
</dbReference>
<dbReference type="HOGENOM" id="CLU_069674_2_0_9"/>
<dbReference type="UniPathway" id="UPA00245"/>
<dbReference type="Proteomes" id="UP000001877">
    <property type="component" value="Chromosome"/>
</dbReference>
<dbReference type="GO" id="GO:0005829">
    <property type="term" value="C:cytosol"/>
    <property type="evidence" value="ECO:0007669"/>
    <property type="project" value="TreeGrafter"/>
</dbReference>
<dbReference type="GO" id="GO:1903600">
    <property type="term" value="C:glutaminase complex"/>
    <property type="evidence" value="ECO:0007669"/>
    <property type="project" value="TreeGrafter"/>
</dbReference>
<dbReference type="GO" id="GO:0004359">
    <property type="term" value="F:glutaminase activity"/>
    <property type="evidence" value="ECO:0007669"/>
    <property type="project" value="UniProtKB-UniRule"/>
</dbReference>
<dbReference type="GO" id="GO:0036381">
    <property type="term" value="F:pyridoxal 5'-phosphate synthase (glutamine hydrolysing) activity"/>
    <property type="evidence" value="ECO:0007669"/>
    <property type="project" value="UniProtKB-UniRule"/>
</dbReference>
<dbReference type="GO" id="GO:0006543">
    <property type="term" value="P:glutamine catabolic process"/>
    <property type="evidence" value="ECO:0007669"/>
    <property type="project" value="UniProtKB-UniRule"/>
</dbReference>
<dbReference type="GO" id="GO:0042823">
    <property type="term" value="P:pyridoxal phosphate biosynthetic process"/>
    <property type="evidence" value="ECO:0007669"/>
    <property type="project" value="UniProtKB-UniRule"/>
</dbReference>
<dbReference type="GO" id="GO:0008614">
    <property type="term" value="P:pyridoxine metabolic process"/>
    <property type="evidence" value="ECO:0007669"/>
    <property type="project" value="TreeGrafter"/>
</dbReference>
<dbReference type="CDD" id="cd01749">
    <property type="entry name" value="GATase1_PB"/>
    <property type="match status" value="1"/>
</dbReference>
<dbReference type="FunFam" id="3.40.50.880:FF:000010">
    <property type="entry name" value="uncharacterized protein LOC100176842 isoform X2"/>
    <property type="match status" value="1"/>
</dbReference>
<dbReference type="Gene3D" id="3.40.50.880">
    <property type="match status" value="1"/>
</dbReference>
<dbReference type="HAMAP" id="MF_01615">
    <property type="entry name" value="PdxT"/>
    <property type="match status" value="1"/>
</dbReference>
<dbReference type="InterPro" id="IPR029062">
    <property type="entry name" value="Class_I_gatase-like"/>
</dbReference>
<dbReference type="InterPro" id="IPR002161">
    <property type="entry name" value="PdxT/SNO"/>
</dbReference>
<dbReference type="InterPro" id="IPR021196">
    <property type="entry name" value="PdxT/SNO_CS"/>
</dbReference>
<dbReference type="NCBIfam" id="TIGR03800">
    <property type="entry name" value="PLP_synth_Pdx2"/>
    <property type="match status" value="1"/>
</dbReference>
<dbReference type="PANTHER" id="PTHR31559">
    <property type="entry name" value="PYRIDOXAL 5'-PHOSPHATE SYNTHASE SUBUNIT SNO"/>
    <property type="match status" value="1"/>
</dbReference>
<dbReference type="PANTHER" id="PTHR31559:SF0">
    <property type="entry name" value="PYRIDOXAL 5'-PHOSPHATE SYNTHASE SUBUNIT SNO1-RELATED"/>
    <property type="match status" value="1"/>
</dbReference>
<dbReference type="Pfam" id="PF01174">
    <property type="entry name" value="SNO"/>
    <property type="match status" value="1"/>
</dbReference>
<dbReference type="PIRSF" id="PIRSF005639">
    <property type="entry name" value="Glut_amidoT_SNO"/>
    <property type="match status" value="1"/>
</dbReference>
<dbReference type="SUPFAM" id="SSF52317">
    <property type="entry name" value="Class I glutamine amidotransferase-like"/>
    <property type="match status" value="1"/>
</dbReference>
<dbReference type="PROSITE" id="PS01236">
    <property type="entry name" value="PDXT_SNO_1"/>
    <property type="match status" value="1"/>
</dbReference>
<dbReference type="PROSITE" id="PS51130">
    <property type="entry name" value="PDXT_SNO_2"/>
    <property type="match status" value="1"/>
</dbReference>
<evidence type="ECO:0000255" key="1">
    <source>
        <dbReference type="HAMAP-Rule" id="MF_01615"/>
    </source>
</evidence>
<accession>C0ZH53</accession>
<proteinExistence type="inferred from homology"/>
<sequence>MKIGVLALQGAVAEHLRMLEEVGATAVPVKRVEELDDLDGLVIPGGESTTISKLMHKYGFMEAVQEFGKANKPIFGTCAGAILLAKRIQGQDDYHLGLMDIKVERNAFGRQKESFEVLMPVADVGADYPAVFIRAPYIMEVGENGQVLAKHEDKIVVARSGHYLAAAFHPELTEDTRLHKYFLDMVKEYRS</sequence>
<reference key="1">
    <citation type="submission" date="2005-03" db="EMBL/GenBank/DDBJ databases">
        <title>Brevibacillus brevis strain 47, complete genome.</title>
        <authorList>
            <person name="Hosoyama A."/>
            <person name="Yamada R."/>
            <person name="Hongo Y."/>
            <person name="Terui Y."/>
            <person name="Ankai A."/>
            <person name="Masuyama W."/>
            <person name="Sekiguchi M."/>
            <person name="Takeda T."/>
            <person name="Asano K."/>
            <person name="Ohji S."/>
            <person name="Ichikawa N."/>
            <person name="Narita S."/>
            <person name="Aoki N."/>
            <person name="Miura H."/>
            <person name="Matsushita S."/>
            <person name="Sekigawa T."/>
            <person name="Yamagata H."/>
            <person name="Yoshikawa H."/>
            <person name="Udaka S."/>
            <person name="Tanikawa S."/>
            <person name="Fujita N."/>
        </authorList>
    </citation>
    <scope>NUCLEOTIDE SEQUENCE [LARGE SCALE GENOMIC DNA]</scope>
    <source>
        <strain>47 / JCM 6285 / NBRC 100599</strain>
    </source>
</reference>